<gene>
    <name evidence="1" type="primary">rpsF</name>
    <name type="ordered locus">Atu1091</name>
    <name type="ORF">AGR_C_2022</name>
</gene>
<sequence length="153" mass="17766">MALYEHIFLARQDISAQQVDALVEQYKGVIESFGGKVGRVENWGLKSLTYRIKKNRKAHYALMDIDAPAAAVHEVERQMRINEDVLRYMTIAVEAHEEGPSAMMQKRDRDDRPRRDGDRPDRGPREDRGPRPPREGGFGDREDRPRRPREDRA</sequence>
<dbReference type="EMBL" id="AE007869">
    <property type="protein sequence ID" value="AAL42104.1"/>
    <property type="molecule type" value="Genomic_DNA"/>
</dbReference>
<dbReference type="PIR" id="AB2711">
    <property type="entry name" value="AB2711"/>
</dbReference>
<dbReference type="RefSeq" id="NP_529003.1">
    <property type="nucleotide sequence ID" value="NC_003062.2"/>
</dbReference>
<dbReference type="RefSeq" id="WP_006314574.1">
    <property type="nucleotide sequence ID" value="NC_003062.2"/>
</dbReference>
<dbReference type="SMR" id="Q8UGE7"/>
<dbReference type="STRING" id="176299.Atu1091"/>
<dbReference type="EnsemblBacteria" id="AAL42104">
    <property type="protein sequence ID" value="AAL42104"/>
    <property type="gene ID" value="Atu1091"/>
</dbReference>
<dbReference type="GeneID" id="1133129"/>
<dbReference type="KEGG" id="atu:Atu1091"/>
<dbReference type="PATRIC" id="fig|176299.10.peg.1107"/>
<dbReference type="eggNOG" id="COG0360">
    <property type="taxonomic scope" value="Bacteria"/>
</dbReference>
<dbReference type="HOGENOM" id="CLU_113441_2_0_5"/>
<dbReference type="OrthoDB" id="9812702at2"/>
<dbReference type="PhylomeDB" id="Q8UGE7"/>
<dbReference type="BioCyc" id="AGRO:ATU1091-MONOMER"/>
<dbReference type="Proteomes" id="UP000000813">
    <property type="component" value="Chromosome circular"/>
</dbReference>
<dbReference type="GO" id="GO:0022627">
    <property type="term" value="C:cytosolic small ribosomal subunit"/>
    <property type="evidence" value="ECO:0007669"/>
    <property type="project" value="TreeGrafter"/>
</dbReference>
<dbReference type="GO" id="GO:0070181">
    <property type="term" value="F:small ribosomal subunit rRNA binding"/>
    <property type="evidence" value="ECO:0007669"/>
    <property type="project" value="TreeGrafter"/>
</dbReference>
<dbReference type="GO" id="GO:0003735">
    <property type="term" value="F:structural constituent of ribosome"/>
    <property type="evidence" value="ECO:0007669"/>
    <property type="project" value="InterPro"/>
</dbReference>
<dbReference type="GO" id="GO:0006412">
    <property type="term" value="P:translation"/>
    <property type="evidence" value="ECO:0007669"/>
    <property type="project" value="UniProtKB-UniRule"/>
</dbReference>
<dbReference type="CDD" id="cd00473">
    <property type="entry name" value="bS6"/>
    <property type="match status" value="1"/>
</dbReference>
<dbReference type="Gene3D" id="3.30.70.60">
    <property type="match status" value="1"/>
</dbReference>
<dbReference type="HAMAP" id="MF_00360">
    <property type="entry name" value="Ribosomal_bS6"/>
    <property type="match status" value="1"/>
</dbReference>
<dbReference type="InterPro" id="IPR000529">
    <property type="entry name" value="Ribosomal_bS6"/>
</dbReference>
<dbReference type="InterPro" id="IPR035980">
    <property type="entry name" value="Ribosomal_bS6_sf"/>
</dbReference>
<dbReference type="InterPro" id="IPR020814">
    <property type="entry name" value="Ribosomal_S6_plastid/chlpt"/>
</dbReference>
<dbReference type="InterPro" id="IPR014717">
    <property type="entry name" value="Transl_elong_EF1B/ribsomal_bS6"/>
</dbReference>
<dbReference type="NCBIfam" id="TIGR00166">
    <property type="entry name" value="S6"/>
    <property type="match status" value="1"/>
</dbReference>
<dbReference type="PANTHER" id="PTHR21011">
    <property type="entry name" value="MITOCHONDRIAL 28S RIBOSOMAL PROTEIN S6"/>
    <property type="match status" value="1"/>
</dbReference>
<dbReference type="PANTHER" id="PTHR21011:SF1">
    <property type="entry name" value="SMALL RIBOSOMAL SUBUNIT PROTEIN BS6M"/>
    <property type="match status" value="1"/>
</dbReference>
<dbReference type="Pfam" id="PF01250">
    <property type="entry name" value="Ribosomal_S6"/>
    <property type="match status" value="1"/>
</dbReference>
<dbReference type="SUPFAM" id="SSF54995">
    <property type="entry name" value="Ribosomal protein S6"/>
    <property type="match status" value="1"/>
</dbReference>
<organism>
    <name type="scientific">Agrobacterium fabrum (strain C58 / ATCC 33970)</name>
    <name type="common">Agrobacterium tumefaciens (strain C58)</name>
    <dbReference type="NCBI Taxonomy" id="176299"/>
    <lineage>
        <taxon>Bacteria</taxon>
        <taxon>Pseudomonadati</taxon>
        <taxon>Pseudomonadota</taxon>
        <taxon>Alphaproteobacteria</taxon>
        <taxon>Hyphomicrobiales</taxon>
        <taxon>Rhizobiaceae</taxon>
        <taxon>Rhizobium/Agrobacterium group</taxon>
        <taxon>Agrobacterium</taxon>
        <taxon>Agrobacterium tumefaciens complex</taxon>
    </lineage>
</organism>
<comment type="function">
    <text evidence="1">Binds together with bS18 to 16S ribosomal RNA.</text>
</comment>
<comment type="similarity">
    <text evidence="1">Belongs to the bacterial ribosomal protein bS6 family.</text>
</comment>
<name>RS6_AGRFC</name>
<keyword id="KW-1185">Reference proteome</keyword>
<keyword id="KW-0687">Ribonucleoprotein</keyword>
<keyword id="KW-0689">Ribosomal protein</keyword>
<keyword id="KW-0694">RNA-binding</keyword>
<keyword id="KW-0699">rRNA-binding</keyword>
<protein>
    <recommendedName>
        <fullName evidence="1">Small ribosomal subunit protein bS6</fullName>
    </recommendedName>
    <alternativeName>
        <fullName evidence="3">30S ribosomal protein S6</fullName>
    </alternativeName>
</protein>
<proteinExistence type="inferred from homology"/>
<evidence type="ECO:0000255" key="1">
    <source>
        <dbReference type="HAMAP-Rule" id="MF_00360"/>
    </source>
</evidence>
<evidence type="ECO:0000256" key="2">
    <source>
        <dbReference type="SAM" id="MobiDB-lite"/>
    </source>
</evidence>
<evidence type="ECO:0000305" key="3"/>
<feature type="chain" id="PRO_0000176714" description="Small ribosomal subunit protein bS6">
    <location>
        <begin position="1"/>
        <end position="153"/>
    </location>
</feature>
<feature type="region of interest" description="Disordered" evidence="2">
    <location>
        <begin position="94"/>
        <end position="153"/>
    </location>
</feature>
<accession>Q8UGE7</accession>
<reference key="1">
    <citation type="journal article" date="2001" name="Science">
        <title>The genome of the natural genetic engineer Agrobacterium tumefaciens C58.</title>
        <authorList>
            <person name="Wood D.W."/>
            <person name="Setubal J.C."/>
            <person name="Kaul R."/>
            <person name="Monks D.E."/>
            <person name="Kitajima J.P."/>
            <person name="Okura V.K."/>
            <person name="Zhou Y."/>
            <person name="Chen L."/>
            <person name="Wood G.E."/>
            <person name="Almeida N.F. Jr."/>
            <person name="Woo L."/>
            <person name="Chen Y."/>
            <person name="Paulsen I.T."/>
            <person name="Eisen J.A."/>
            <person name="Karp P.D."/>
            <person name="Bovee D. Sr."/>
            <person name="Chapman P."/>
            <person name="Clendenning J."/>
            <person name="Deatherage G."/>
            <person name="Gillet W."/>
            <person name="Grant C."/>
            <person name="Kutyavin T."/>
            <person name="Levy R."/>
            <person name="Li M.-J."/>
            <person name="McClelland E."/>
            <person name="Palmieri A."/>
            <person name="Raymond C."/>
            <person name="Rouse G."/>
            <person name="Saenphimmachak C."/>
            <person name="Wu Z."/>
            <person name="Romero P."/>
            <person name="Gordon D."/>
            <person name="Zhang S."/>
            <person name="Yoo H."/>
            <person name="Tao Y."/>
            <person name="Biddle P."/>
            <person name="Jung M."/>
            <person name="Krespan W."/>
            <person name="Perry M."/>
            <person name="Gordon-Kamm B."/>
            <person name="Liao L."/>
            <person name="Kim S."/>
            <person name="Hendrick C."/>
            <person name="Zhao Z.-Y."/>
            <person name="Dolan M."/>
            <person name="Chumley F."/>
            <person name="Tingey S.V."/>
            <person name="Tomb J.-F."/>
            <person name="Gordon M.P."/>
            <person name="Olson M.V."/>
            <person name="Nester E.W."/>
        </authorList>
    </citation>
    <scope>NUCLEOTIDE SEQUENCE [LARGE SCALE GENOMIC DNA]</scope>
    <source>
        <strain>C58 / ATCC 33970</strain>
    </source>
</reference>
<reference key="2">
    <citation type="journal article" date="2001" name="Science">
        <title>Genome sequence of the plant pathogen and biotechnology agent Agrobacterium tumefaciens C58.</title>
        <authorList>
            <person name="Goodner B."/>
            <person name="Hinkle G."/>
            <person name="Gattung S."/>
            <person name="Miller N."/>
            <person name="Blanchard M."/>
            <person name="Qurollo B."/>
            <person name="Goldman B.S."/>
            <person name="Cao Y."/>
            <person name="Askenazi M."/>
            <person name="Halling C."/>
            <person name="Mullin L."/>
            <person name="Houmiel K."/>
            <person name="Gordon J."/>
            <person name="Vaudin M."/>
            <person name="Iartchouk O."/>
            <person name="Epp A."/>
            <person name="Liu F."/>
            <person name="Wollam C."/>
            <person name="Allinger M."/>
            <person name="Doughty D."/>
            <person name="Scott C."/>
            <person name="Lappas C."/>
            <person name="Markelz B."/>
            <person name="Flanagan C."/>
            <person name="Crowell C."/>
            <person name="Gurson J."/>
            <person name="Lomo C."/>
            <person name="Sear C."/>
            <person name="Strub G."/>
            <person name="Cielo C."/>
            <person name="Slater S."/>
        </authorList>
    </citation>
    <scope>NUCLEOTIDE SEQUENCE [LARGE SCALE GENOMIC DNA]</scope>
    <source>
        <strain>C58 / ATCC 33970</strain>
    </source>
</reference>